<feature type="transit peptide" description="Mitochondrion" evidence="1">
    <location>
        <begin position="1"/>
        <end position="40"/>
    </location>
</feature>
<feature type="chain" id="PRO_0000395768" description="Lon protease homolog, mitochondrial">
    <location>
        <begin position="41"/>
        <end position="936"/>
    </location>
</feature>
<feature type="domain" description="Lon N-terminal" evidence="3">
    <location>
        <begin position="112"/>
        <end position="352"/>
    </location>
</feature>
<feature type="domain" description="Lon proteolytic" evidence="2">
    <location>
        <begin position="748"/>
        <end position="932"/>
    </location>
</feature>
<feature type="region of interest" description="Disordered" evidence="4">
    <location>
        <begin position="65"/>
        <end position="95"/>
    </location>
</feature>
<feature type="compositionally biased region" description="Low complexity" evidence="4">
    <location>
        <begin position="66"/>
        <end position="95"/>
    </location>
</feature>
<feature type="active site" evidence="1">
    <location>
        <position position="838"/>
    </location>
</feature>
<feature type="active site" evidence="1">
    <location>
        <position position="881"/>
    </location>
</feature>
<feature type="binding site" evidence="1">
    <location>
        <begin position="507"/>
        <end position="514"/>
    </location>
    <ligand>
        <name>ATP</name>
        <dbReference type="ChEBI" id="CHEBI:30616"/>
    </ligand>
</feature>
<accession>A4S6Y4</accession>
<protein>
    <recommendedName>
        <fullName evidence="1">Lon protease homolog, mitochondrial</fullName>
        <ecNumber evidence="1">3.4.21.53</ecNumber>
    </recommendedName>
</protein>
<keyword id="KW-0067">ATP-binding</keyword>
<keyword id="KW-0238">DNA-binding</keyword>
<keyword id="KW-0378">Hydrolase</keyword>
<keyword id="KW-0496">Mitochondrion</keyword>
<keyword id="KW-0547">Nucleotide-binding</keyword>
<keyword id="KW-0645">Protease</keyword>
<keyword id="KW-1185">Reference proteome</keyword>
<keyword id="KW-0720">Serine protease</keyword>
<keyword id="KW-0809">Transit peptide</keyword>
<gene>
    <name type="ORF">OSTLU_41620</name>
    <name type="ORF">OSTLU_52138</name>
</gene>
<evidence type="ECO:0000255" key="1">
    <source>
        <dbReference type="HAMAP-Rule" id="MF_03120"/>
    </source>
</evidence>
<evidence type="ECO:0000255" key="2">
    <source>
        <dbReference type="PROSITE-ProRule" id="PRU01122"/>
    </source>
</evidence>
<evidence type="ECO:0000255" key="3">
    <source>
        <dbReference type="PROSITE-ProRule" id="PRU01123"/>
    </source>
</evidence>
<evidence type="ECO:0000256" key="4">
    <source>
        <dbReference type="SAM" id="MobiDB-lite"/>
    </source>
</evidence>
<organism>
    <name type="scientific">Ostreococcus lucimarinus (strain CCE9901)</name>
    <dbReference type="NCBI Taxonomy" id="436017"/>
    <lineage>
        <taxon>Eukaryota</taxon>
        <taxon>Viridiplantae</taxon>
        <taxon>Chlorophyta</taxon>
        <taxon>Mamiellophyceae</taxon>
        <taxon>Mamiellales</taxon>
        <taxon>Bathycoccaceae</taxon>
        <taxon>Ostreococcus</taxon>
    </lineage>
</organism>
<proteinExistence type="inferred from homology"/>
<comment type="function">
    <text evidence="1">ATP-dependent serine protease that mediates the selective degradation of misfolded, unassembled or oxidatively damaged polypeptides as well as certain short-lived regulatory proteins in the mitochondrial matrix. May also have a chaperone function in the assembly of inner membrane protein complexes. Participates in the regulation of mitochondrial gene expression and in the maintenance of the integrity of the mitochondrial genome. Binds to mitochondrial DNA in a site-specific manner.</text>
</comment>
<comment type="catalytic activity">
    <reaction evidence="1">
        <text>Hydrolysis of proteins in presence of ATP.</text>
        <dbReference type="EC" id="3.4.21.53"/>
    </reaction>
</comment>
<comment type="subunit">
    <text evidence="1">Homohexamer or homoheptamer. Organized in a ring with a central cavity.</text>
</comment>
<comment type="subcellular location">
    <subcellularLocation>
        <location evidence="1">Mitochondrion matrix</location>
    </subcellularLocation>
</comment>
<comment type="similarity">
    <text evidence="1">Belongs to the peptidase S16 family.</text>
</comment>
<name>LONM_OSTLU</name>
<dbReference type="EC" id="3.4.21.53" evidence="1"/>
<dbReference type="EMBL" id="CP000593">
    <property type="protein sequence ID" value="ABO99468.1"/>
    <property type="molecule type" value="Genomic_DNA"/>
</dbReference>
<dbReference type="EMBL" id="CP000601">
    <property type="protein sequence ID" value="ABP01139.1"/>
    <property type="molecule type" value="Genomic_DNA"/>
</dbReference>
<dbReference type="RefSeq" id="XP_001421175.1">
    <property type="nucleotide sequence ID" value="XM_001421138.1"/>
</dbReference>
<dbReference type="RefSeq" id="XP_001422780.1">
    <property type="nucleotide sequence ID" value="XM_001422743.1"/>
</dbReference>
<dbReference type="SMR" id="A4S6Y4"/>
<dbReference type="STRING" id="436017.A4S6Y4"/>
<dbReference type="EnsemblPlants" id="ABO99468">
    <property type="protein sequence ID" value="ABO99468"/>
    <property type="gene ID" value="OSTLU_41620"/>
</dbReference>
<dbReference type="EnsemblPlants" id="ABP01139">
    <property type="protein sequence ID" value="ABP01139"/>
    <property type="gene ID" value="OSTLU_52138"/>
</dbReference>
<dbReference type="GeneID" id="5005054"/>
<dbReference type="GeneID" id="5006932"/>
<dbReference type="Gramene" id="ABO99468">
    <property type="protein sequence ID" value="ABO99468"/>
    <property type="gene ID" value="OSTLU_41620"/>
</dbReference>
<dbReference type="Gramene" id="ABP01139">
    <property type="protein sequence ID" value="ABP01139"/>
    <property type="gene ID" value="OSTLU_52138"/>
</dbReference>
<dbReference type="KEGG" id="olu:OSTLU_41620"/>
<dbReference type="KEGG" id="olu:OSTLU_52138"/>
<dbReference type="eggNOG" id="KOG2004">
    <property type="taxonomic scope" value="Eukaryota"/>
</dbReference>
<dbReference type="HOGENOM" id="CLU_004109_1_0_1"/>
<dbReference type="OMA" id="WLTNIPW"/>
<dbReference type="OrthoDB" id="2411602at2759"/>
<dbReference type="Proteomes" id="UP000001568">
    <property type="component" value="Chromosome 13"/>
</dbReference>
<dbReference type="Proteomes" id="UP000001568">
    <property type="component" value="Chromosome 21"/>
</dbReference>
<dbReference type="GO" id="GO:0005759">
    <property type="term" value="C:mitochondrial matrix"/>
    <property type="evidence" value="ECO:0007669"/>
    <property type="project" value="UniProtKB-SubCell"/>
</dbReference>
<dbReference type="GO" id="GO:0005524">
    <property type="term" value="F:ATP binding"/>
    <property type="evidence" value="ECO:0007669"/>
    <property type="project" value="UniProtKB-UniRule"/>
</dbReference>
<dbReference type="GO" id="GO:0016887">
    <property type="term" value="F:ATP hydrolysis activity"/>
    <property type="evidence" value="ECO:0007669"/>
    <property type="project" value="UniProtKB-UniRule"/>
</dbReference>
<dbReference type="GO" id="GO:0004176">
    <property type="term" value="F:ATP-dependent peptidase activity"/>
    <property type="evidence" value="ECO:0007669"/>
    <property type="project" value="UniProtKB-UniRule"/>
</dbReference>
<dbReference type="GO" id="GO:0043565">
    <property type="term" value="F:sequence-specific DNA binding"/>
    <property type="evidence" value="ECO:0007669"/>
    <property type="project" value="UniProtKB-UniRule"/>
</dbReference>
<dbReference type="GO" id="GO:0004252">
    <property type="term" value="F:serine-type endopeptidase activity"/>
    <property type="evidence" value="ECO:0007669"/>
    <property type="project" value="UniProtKB-UniRule"/>
</dbReference>
<dbReference type="GO" id="GO:0003697">
    <property type="term" value="F:single-stranded DNA binding"/>
    <property type="evidence" value="ECO:0007669"/>
    <property type="project" value="TreeGrafter"/>
</dbReference>
<dbReference type="GO" id="GO:0034599">
    <property type="term" value="P:cellular response to oxidative stress"/>
    <property type="evidence" value="ECO:0007669"/>
    <property type="project" value="UniProtKB-UniRule"/>
</dbReference>
<dbReference type="GO" id="GO:0051131">
    <property type="term" value="P:chaperone-mediated protein complex assembly"/>
    <property type="evidence" value="ECO:0007669"/>
    <property type="project" value="UniProtKB-UniRule"/>
</dbReference>
<dbReference type="GO" id="GO:0007005">
    <property type="term" value="P:mitochondrion organization"/>
    <property type="evidence" value="ECO:0007669"/>
    <property type="project" value="TreeGrafter"/>
</dbReference>
<dbReference type="GO" id="GO:0070407">
    <property type="term" value="P:oxidation-dependent protein catabolic process"/>
    <property type="evidence" value="ECO:0007669"/>
    <property type="project" value="UniProtKB-UniRule"/>
</dbReference>
<dbReference type="GO" id="GO:0006515">
    <property type="term" value="P:protein quality control for misfolded or incompletely synthesized proteins"/>
    <property type="evidence" value="ECO:0007669"/>
    <property type="project" value="UniProtKB-UniRule"/>
</dbReference>
<dbReference type="CDD" id="cd19500">
    <property type="entry name" value="RecA-like_Lon"/>
    <property type="match status" value="1"/>
</dbReference>
<dbReference type="FunFam" id="3.40.50.300:FF:000021">
    <property type="entry name" value="Lon protease homolog"/>
    <property type="match status" value="1"/>
</dbReference>
<dbReference type="FunFam" id="1.20.5.5270:FF:000001">
    <property type="entry name" value="Lon protease homolog, mitochondrial"/>
    <property type="match status" value="1"/>
</dbReference>
<dbReference type="FunFam" id="1.20.58.1480:FF:000002">
    <property type="entry name" value="Lon protease homolog, mitochondrial"/>
    <property type="match status" value="1"/>
</dbReference>
<dbReference type="FunFam" id="3.30.230.10:FF:000015">
    <property type="entry name" value="Lon protease homolog, mitochondrial"/>
    <property type="match status" value="1"/>
</dbReference>
<dbReference type="Gene3D" id="1.10.8.60">
    <property type="match status" value="1"/>
</dbReference>
<dbReference type="Gene3D" id="1.20.5.5270">
    <property type="match status" value="1"/>
</dbReference>
<dbReference type="Gene3D" id="1.20.58.1480">
    <property type="match status" value="1"/>
</dbReference>
<dbReference type="Gene3D" id="3.30.230.10">
    <property type="match status" value="1"/>
</dbReference>
<dbReference type="Gene3D" id="2.30.130.40">
    <property type="entry name" value="LON domain-like"/>
    <property type="match status" value="1"/>
</dbReference>
<dbReference type="Gene3D" id="3.40.50.300">
    <property type="entry name" value="P-loop containing nucleotide triphosphate hydrolases"/>
    <property type="match status" value="1"/>
</dbReference>
<dbReference type="HAMAP" id="MF_03120">
    <property type="entry name" value="lonm_euk"/>
    <property type="match status" value="1"/>
</dbReference>
<dbReference type="InterPro" id="IPR003593">
    <property type="entry name" value="AAA+_ATPase"/>
</dbReference>
<dbReference type="InterPro" id="IPR003959">
    <property type="entry name" value="ATPase_AAA_core"/>
</dbReference>
<dbReference type="InterPro" id="IPR004815">
    <property type="entry name" value="Lon_bac/euk-typ"/>
</dbReference>
<dbReference type="InterPro" id="IPR054594">
    <property type="entry name" value="Lon_lid"/>
</dbReference>
<dbReference type="InterPro" id="IPR008269">
    <property type="entry name" value="Lon_proteolytic"/>
</dbReference>
<dbReference type="InterPro" id="IPR027065">
    <property type="entry name" value="Lon_Prtase"/>
</dbReference>
<dbReference type="InterPro" id="IPR003111">
    <property type="entry name" value="Lon_prtase_N"/>
</dbReference>
<dbReference type="InterPro" id="IPR046336">
    <property type="entry name" value="Lon_prtase_N_sf"/>
</dbReference>
<dbReference type="InterPro" id="IPR027503">
    <property type="entry name" value="Lonm_euk"/>
</dbReference>
<dbReference type="InterPro" id="IPR027417">
    <property type="entry name" value="P-loop_NTPase"/>
</dbReference>
<dbReference type="InterPro" id="IPR008268">
    <property type="entry name" value="Peptidase_S16_AS"/>
</dbReference>
<dbReference type="InterPro" id="IPR015947">
    <property type="entry name" value="PUA-like_sf"/>
</dbReference>
<dbReference type="InterPro" id="IPR020568">
    <property type="entry name" value="Ribosomal_Su5_D2-typ_SF"/>
</dbReference>
<dbReference type="InterPro" id="IPR014721">
    <property type="entry name" value="Ribsml_uS5_D2-typ_fold_subgr"/>
</dbReference>
<dbReference type="NCBIfam" id="TIGR00763">
    <property type="entry name" value="lon"/>
    <property type="match status" value="1"/>
</dbReference>
<dbReference type="PANTHER" id="PTHR43718">
    <property type="entry name" value="LON PROTEASE"/>
    <property type="match status" value="1"/>
</dbReference>
<dbReference type="PANTHER" id="PTHR43718:SF2">
    <property type="entry name" value="LON PROTEASE HOMOLOG, MITOCHONDRIAL"/>
    <property type="match status" value="1"/>
</dbReference>
<dbReference type="Pfam" id="PF00004">
    <property type="entry name" value="AAA"/>
    <property type="match status" value="1"/>
</dbReference>
<dbReference type="Pfam" id="PF05362">
    <property type="entry name" value="Lon_C"/>
    <property type="match status" value="1"/>
</dbReference>
<dbReference type="Pfam" id="PF22667">
    <property type="entry name" value="Lon_lid"/>
    <property type="match status" value="1"/>
</dbReference>
<dbReference type="Pfam" id="PF02190">
    <property type="entry name" value="LON_substr_bdg"/>
    <property type="match status" value="1"/>
</dbReference>
<dbReference type="PIRSF" id="PIRSF001174">
    <property type="entry name" value="Lon_proteas"/>
    <property type="match status" value="1"/>
</dbReference>
<dbReference type="PRINTS" id="PR00830">
    <property type="entry name" value="ENDOLAPTASE"/>
</dbReference>
<dbReference type="SMART" id="SM00382">
    <property type="entry name" value="AAA"/>
    <property type="match status" value="1"/>
</dbReference>
<dbReference type="SMART" id="SM00464">
    <property type="entry name" value="LON"/>
    <property type="match status" value="1"/>
</dbReference>
<dbReference type="SUPFAM" id="SSF52540">
    <property type="entry name" value="P-loop containing nucleoside triphosphate hydrolases"/>
    <property type="match status" value="1"/>
</dbReference>
<dbReference type="SUPFAM" id="SSF88697">
    <property type="entry name" value="PUA domain-like"/>
    <property type="match status" value="1"/>
</dbReference>
<dbReference type="SUPFAM" id="SSF54211">
    <property type="entry name" value="Ribosomal protein S5 domain 2-like"/>
    <property type="match status" value="1"/>
</dbReference>
<dbReference type="PROSITE" id="PS51787">
    <property type="entry name" value="LON_N"/>
    <property type="match status" value="1"/>
</dbReference>
<dbReference type="PROSITE" id="PS51786">
    <property type="entry name" value="LON_PROTEOLYTIC"/>
    <property type="match status" value="1"/>
</dbReference>
<dbReference type="PROSITE" id="PS01046">
    <property type="entry name" value="LON_SER"/>
    <property type="match status" value="1"/>
</dbReference>
<reference key="1">
    <citation type="journal article" date="2007" name="Proc. Natl. Acad. Sci. U.S.A.">
        <title>The tiny eukaryote Ostreococcus provides genomic insights into the paradox of plankton speciation.</title>
        <authorList>
            <person name="Palenik B."/>
            <person name="Grimwood J."/>
            <person name="Aerts A."/>
            <person name="Rouze P."/>
            <person name="Salamov A."/>
            <person name="Putnam N."/>
            <person name="Dupont C."/>
            <person name="Jorgensen R."/>
            <person name="Derelle E."/>
            <person name="Rombauts S."/>
            <person name="Zhou K."/>
            <person name="Otillar R."/>
            <person name="Merchant S.S."/>
            <person name="Podell S."/>
            <person name="Gaasterland T."/>
            <person name="Napoli C."/>
            <person name="Gendler K."/>
            <person name="Manuell A."/>
            <person name="Tai V."/>
            <person name="Vallon O."/>
            <person name="Piganeau G."/>
            <person name="Jancek S."/>
            <person name="Heijde M."/>
            <person name="Jabbari K."/>
            <person name="Bowler C."/>
            <person name="Lohr M."/>
            <person name="Robbens S."/>
            <person name="Werner G."/>
            <person name="Dubchak I."/>
            <person name="Pazour G.J."/>
            <person name="Ren Q."/>
            <person name="Paulsen I."/>
            <person name="Delwiche C."/>
            <person name="Schmutz J."/>
            <person name="Rokhsar D."/>
            <person name="Van de Peer Y."/>
            <person name="Moreau H."/>
            <person name="Grigoriev I.V."/>
        </authorList>
    </citation>
    <scope>NUCLEOTIDE SEQUENCE [LARGE SCALE GENOMIC DNA]</scope>
    <source>
        <strain>CCE9901</strain>
    </source>
</reference>
<sequence>MYATRAIARRLERHAARCKGAHVARAVRGARARTTSAPRALLDALGAGRGDADAFGTRTRRTRNAFVSSVDGDGSTGSTGSSSSSSSSAFGDSASSGGIMVSASHPSSHPQVLAVPLPRRPLMPGIIMPVKVTDEKLIAELEDMRNRGQAYVGAFLQRTDAASSASKGEGEDVFDALSAMKRTTTSVGLDGEEMVDEDEVDPADHMHDIGTFAQVHNIVRLPTDSTTGEESATLLLLGHRRLRKLGTMKRDPMVVKVEHLKDEKFDANDDIIKATTNEVVATIKDLLKTNPLHKETLQYFAQNFNDFQDPPKLADLGASMCSADDAQLQHVLELLSVKERLDATLELLKKEVEIGKLQADIGKKVEEKISGDQRRYFLMEQLKSIKKELGMERDDKTALIEKFTKRFEPKRASVPEDTAKVIDEELQKLGGLEPSSSEFNVTRNYLEWLTSLPWGVCGDEKLDISHAQEVLDSDHYGLEDVKDRILEFIAVGQLLGTTQGKIITMVGPPGVGKTSIGQSIAKALGRKFYRFSVGGMSDVAEIKGHRRTYVGAMPGKLIQCLKSTGVCNPVVLIDEIDKLGRGYQGDPASALLELLDPEQNGTFLDHYLDVPVDLSKVLFVCTANVLDTIPGPLLDRMEVVRLSGYITDEKVQIARTYLEKAAREKSGLSDVDASITDAAMGKLIGDYCREAGVRNLQKHLEKVYRKIALKVARAKSADEKLDSIVVDVDDLVDYVGQPPFATDRIYDVTPPGVVTGLAWTAMGGSTLYIECTAIDSGDGKGALKTTGQLGDVMKESSTIAHTFTRGFLELKDPGNKYLADTSLHVHVPAGATPKDGPSAGITITTSLLSLAMNKPVKPNLAMTGELTLTGRVLPIGGVKEKTIAARRSGVKTIIFPEGNKKDYDELSEDIREGLDAHFVSTYDEVYRQALDWEASS</sequence>